<evidence type="ECO:0000250" key="1">
    <source>
        <dbReference type="UniProtKB" id="P69937"/>
    </source>
</evidence>
<evidence type="ECO:0000255" key="2"/>
<evidence type="ECO:0000305" key="3"/>
<reference key="1">
    <citation type="journal article" date="2003" name="J. Bacteriol.">
        <title>Comparative genomics of Salmonella enterica serovar Typhi strains Ty2 and CT18.</title>
        <authorList>
            <person name="Deng W."/>
            <person name="Liou S.-R."/>
            <person name="Plunkett G. III"/>
            <person name="Mayhew G.F."/>
            <person name="Rose D.J."/>
            <person name="Burland V."/>
            <person name="Kodoyianni V."/>
            <person name="Schwartz D.C."/>
            <person name="Blattner F.R."/>
        </authorList>
    </citation>
    <scope>NUCLEOTIDE SEQUENCE [LARGE SCALE GENOMIC DNA]</scope>
    <source>
        <strain>ATCC 700931 / Ty2</strain>
    </source>
</reference>
<reference key="2">
    <citation type="journal article" date="2001" name="Nature">
        <title>Complete genome sequence of a multiple drug resistant Salmonella enterica serovar Typhi CT18.</title>
        <authorList>
            <person name="Parkhill J."/>
            <person name="Dougan G."/>
            <person name="James K.D."/>
            <person name="Thomson N.R."/>
            <person name="Pickard D."/>
            <person name="Wain J."/>
            <person name="Churcher C.M."/>
            <person name="Mungall K.L."/>
            <person name="Bentley S.D."/>
            <person name="Holden M.T.G."/>
            <person name="Sebaihia M."/>
            <person name="Baker S."/>
            <person name="Basham D."/>
            <person name="Brooks K."/>
            <person name="Chillingworth T."/>
            <person name="Connerton P."/>
            <person name="Cronin A."/>
            <person name="Davis P."/>
            <person name="Davies R.M."/>
            <person name="Dowd L."/>
            <person name="White N."/>
            <person name="Farrar J."/>
            <person name="Feltwell T."/>
            <person name="Hamlin N."/>
            <person name="Haque A."/>
            <person name="Hien T.T."/>
            <person name="Holroyd S."/>
            <person name="Jagels K."/>
            <person name="Krogh A."/>
            <person name="Larsen T.S."/>
            <person name="Leather S."/>
            <person name="Moule S."/>
            <person name="O'Gaora P."/>
            <person name="Parry C."/>
            <person name="Quail M.A."/>
            <person name="Rutherford K.M."/>
            <person name="Simmonds M."/>
            <person name="Skelton J."/>
            <person name="Stevens K."/>
            <person name="Whitehead S."/>
            <person name="Barrell B.G."/>
        </authorList>
    </citation>
    <scope>NUCLEOTIDE SEQUENCE [LARGE SCALE GENOMIC DNA]</scope>
    <source>
        <strain>CT18</strain>
    </source>
</reference>
<organism>
    <name type="scientific">Salmonella typhi</name>
    <dbReference type="NCBI Taxonomy" id="90370"/>
    <lineage>
        <taxon>Bacteria</taxon>
        <taxon>Pseudomonadati</taxon>
        <taxon>Pseudomonadota</taxon>
        <taxon>Gammaproteobacteria</taxon>
        <taxon>Enterobacterales</taxon>
        <taxon>Enterobacteriaceae</taxon>
        <taxon>Salmonella</taxon>
    </lineage>
</organism>
<gene>
    <name evidence="1" type="primary">gdx</name>
    <name type="synonym">sugE</name>
    <name type="ordered locus">STY4698</name>
    <name type="ordered locus">t4390</name>
</gene>
<comment type="function">
    <text evidence="1">Guanidinium ion exporter. Couples guanidinium export to the proton motive force, exchanging one guanidinium ion for two protons.</text>
</comment>
<comment type="subcellular location">
    <subcellularLocation>
        <location evidence="1">Cell inner membrane</location>
        <topology evidence="1">Multi-pass membrane protein</topology>
    </subcellularLocation>
</comment>
<comment type="similarity">
    <text evidence="3">Belongs to the drug/metabolite transporter (DMT) superfamily. Small multidrug resistance (SMR) (TC 2.A.7.1) family. Gdx/SugE subfamily.</text>
</comment>
<protein>
    <recommendedName>
        <fullName evidence="1">Guanidinium exporter</fullName>
    </recommendedName>
</protein>
<proteinExistence type="inferred from homology"/>
<accession>Q8XGT8</accession>
<accession>Q7ALQ5</accession>
<keyword id="KW-0997">Cell inner membrane</keyword>
<keyword id="KW-1003">Cell membrane</keyword>
<keyword id="KW-0406">Ion transport</keyword>
<keyword id="KW-0472">Membrane</keyword>
<keyword id="KW-0812">Transmembrane</keyword>
<keyword id="KW-1133">Transmembrane helix</keyword>
<keyword id="KW-0813">Transport</keyword>
<dbReference type="EMBL" id="AE014613">
    <property type="protein sequence ID" value="AAO71841.1"/>
    <property type="molecule type" value="Genomic_DNA"/>
</dbReference>
<dbReference type="EMBL" id="AL513382">
    <property type="protein sequence ID" value="CAD06818.1"/>
    <property type="molecule type" value="Genomic_DNA"/>
</dbReference>
<dbReference type="RefSeq" id="NP_458777.1">
    <property type="nucleotide sequence ID" value="NC_003198.1"/>
</dbReference>
<dbReference type="RefSeq" id="WP_000118469.1">
    <property type="nucleotide sequence ID" value="NZ_WSUR01000012.1"/>
</dbReference>
<dbReference type="SMR" id="Q8XGT8"/>
<dbReference type="STRING" id="220341.gene:17588516"/>
<dbReference type="KEGG" id="stt:t4390"/>
<dbReference type="KEGG" id="sty:STY4698"/>
<dbReference type="PATRIC" id="fig|220341.7.peg.4799"/>
<dbReference type="eggNOG" id="COG2076">
    <property type="taxonomic scope" value="Bacteria"/>
</dbReference>
<dbReference type="HOGENOM" id="CLU_133067_1_2_6"/>
<dbReference type="OMA" id="CLWMAQK"/>
<dbReference type="OrthoDB" id="9808638at2"/>
<dbReference type="Proteomes" id="UP000000541">
    <property type="component" value="Chromosome"/>
</dbReference>
<dbReference type="Proteomes" id="UP000002670">
    <property type="component" value="Chromosome"/>
</dbReference>
<dbReference type="GO" id="GO:0005886">
    <property type="term" value="C:plasma membrane"/>
    <property type="evidence" value="ECO:0007669"/>
    <property type="project" value="UniProtKB-SubCell"/>
</dbReference>
<dbReference type="GO" id="GO:0022857">
    <property type="term" value="F:transmembrane transporter activity"/>
    <property type="evidence" value="ECO:0007669"/>
    <property type="project" value="InterPro"/>
</dbReference>
<dbReference type="GO" id="GO:0006811">
    <property type="term" value="P:monoatomic ion transport"/>
    <property type="evidence" value="ECO:0007669"/>
    <property type="project" value="UniProtKB-KW"/>
</dbReference>
<dbReference type="FunFam" id="1.10.3730.20:FF:000001">
    <property type="entry name" value="Quaternary ammonium compound resistance transporter SugE"/>
    <property type="match status" value="1"/>
</dbReference>
<dbReference type="Gene3D" id="1.10.3730.20">
    <property type="match status" value="1"/>
</dbReference>
<dbReference type="InterPro" id="IPR000390">
    <property type="entry name" value="Small_drug/metabolite_transptr"/>
</dbReference>
<dbReference type="InterPro" id="IPR045324">
    <property type="entry name" value="Small_multidrug_res"/>
</dbReference>
<dbReference type="NCBIfam" id="NF008512">
    <property type="entry name" value="PRK11431.1"/>
    <property type="match status" value="1"/>
</dbReference>
<dbReference type="PANTHER" id="PTHR30561:SF0">
    <property type="entry name" value="GUANIDINIUM EXPORTER"/>
    <property type="match status" value="1"/>
</dbReference>
<dbReference type="PANTHER" id="PTHR30561">
    <property type="entry name" value="SMR FAMILY PROTON-DEPENDENT DRUG EFFLUX TRANSPORTER SUGE"/>
    <property type="match status" value="1"/>
</dbReference>
<dbReference type="Pfam" id="PF00893">
    <property type="entry name" value="Multi_Drug_Res"/>
    <property type="match status" value="1"/>
</dbReference>
<dbReference type="SUPFAM" id="SSF103481">
    <property type="entry name" value="Multidrug resistance efflux transporter EmrE"/>
    <property type="match status" value="1"/>
</dbReference>
<name>GDX_SALTI</name>
<sequence length="105" mass="10869">MSWIILLIAGLLEVVWAVGLKYTHGFSRLTPSIITITAMVISMALLSWAMKTLPVGTAYAIWTGIGAVGAAITGILLLGESASPARLLSLGLIVAGIIGLKLSAH</sequence>
<feature type="chain" id="PRO_0000108104" description="Guanidinium exporter">
    <location>
        <begin position="1"/>
        <end position="105"/>
    </location>
</feature>
<feature type="transmembrane region" description="Helical" evidence="2">
    <location>
        <begin position="1"/>
        <end position="21"/>
    </location>
</feature>
<feature type="topological domain" description="Cytoplasmic" evidence="2">
    <location>
        <begin position="22"/>
        <end position="28"/>
    </location>
</feature>
<feature type="transmembrane region" description="Helical" evidence="2">
    <location>
        <begin position="29"/>
        <end position="49"/>
    </location>
</feature>
<feature type="topological domain" description="Periplasmic" evidence="2">
    <location>
        <begin position="50"/>
        <end position="57"/>
    </location>
</feature>
<feature type="transmembrane region" description="Helical" evidence="2">
    <location>
        <begin position="58"/>
        <end position="78"/>
    </location>
</feature>
<feature type="topological domain" description="Cytoplasmic" evidence="2">
    <location>
        <begin position="79"/>
        <end position="81"/>
    </location>
</feature>
<feature type="transmembrane region" description="Helical" evidence="2">
    <location>
        <begin position="82"/>
        <end position="102"/>
    </location>
</feature>
<feature type="topological domain" description="Periplasmic" evidence="2">
    <location>
        <begin position="103"/>
        <end position="105"/>
    </location>
</feature>